<proteinExistence type="inferred from homology"/>
<accession>Q8PY64</accession>
<comment type="function">
    <text evidence="1">Catalyzes the methylation of C-15 in cobalt-precorrin-6B followed by the decarboxylation of C-12 to form cobalt-precorrin-7.</text>
</comment>
<comment type="catalytic activity">
    <reaction evidence="1">
        <text>Co-precorrin-6B + S-adenosyl-L-methionine = Co-precorrin-7 + S-adenosyl-L-homocysteine + CO2</text>
        <dbReference type="Rhea" id="RHEA:36067"/>
        <dbReference type="ChEBI" id="CHEBI:16526"/>
        <dbReference type="ChEBI" id="CHEBI:57856"/>
        <dbReference type="ChEBI" id="CHEBI:59789"/>
        <dbReference type="ChEBI" id="CHEBI:70791"/>
        <dbReference type="ChEBI" id="CHEBI:72780"/>
        <dbReference type="EC" id="2.1.1.196"/>
    </reaction>
</comment>
<comment type="pathway">
    <text evidence="1">Cofactor biosynthesis; adenosylcobalamin biosynthesis; cob(II)yrinate a,c-diamide from sirohydrochlorin (anaerobic route): step 8/10.</text>
</comment>
<comment type="similarity">
    <text evidence="1">Belongs to the methyltransferase superfamily. Archaeal-type CbiT family.</text>
</comment>
<gene>
    <name evidence="1" type="primary">cbiT</name>
    <name type="ordered locus">MM_1000</name>
</gene>
<organism>
    <name type="scientific">Methanosarcina mazei (strain ATCC BAA-159 / DSM 3647 / Goe1 / Go1 / JCM 11833 / OCM 88)</name>
    <name type="common">Methanosarcina frisia</name>
    <dbReference type="NCBI Taxonomy" id="192952"/>
    <lineage>
        <taxon>Archaea</taxon>
        <taxon>Methanobacteriati</taxon>
        <taxon>Methanobacteriota</taxon>
        <taxon>Stenosarchaea group</taxon>
        <taxon>Methanomicrobia</taxon>
        <taxon>Methanosarcinales</taxon>
        <taxon>Methanosarcinaceae</taxon>
        <taxon>Methanosarcina</taxon>
    </lineage>
</organism>
<protein>
    <recommendedName>
        <fullName evidence="1">Probable cobalt-precorrin-6B C(15)-methyltransferase (decarboxylating)</fullName>
        <ecNumber evidence="1">2.1.1.196</ecNumber>
    </recommendedName>
</protein>
<evidence type="ECO:0000255" key="1">
    <source>
        <dbReference type="HAMAP-Rule" id="MF_00786"/>
    </source>
</evidence>
<keyword id="KW-0169">Cobalamin biosynthesis</keyword>
<keyword id="KW-0489">Methyltransferase</keyword>
<keyword id="KW-0949">S-adenosyl-L-methionine</keyword>
<keyword id="KW-0808">Transferase</keyword>
<feature type="chain" id="PRO_0000134939" description="Probable cobalt-precorrin-6B C(15)-methyltransferase (decarboxylating)">
    <location>
        <begin position="1"/>
        <end position="184"/>
    </location>
</feature>
<feature type="binding site" evidence="1">
    <location>
        <position position="12"/>
    </location>
    <ligand>
        <name>S-adenosyl-L-methionine</name>
        <dbReference type="ChEBI" id="CHEBI:59789"/>
    </ligand>
</feature>
<feature type="binding site" evidence="1">
    <location>
        <begin position="36"/>
        <end position="40"/>
    </location>
    <ligand>
        <name>S-adenosyl-L-methionine</name>
        <dbReference type="ChEBI" id="CHEBI:59789"/>
    </ligand>
</feature>
<feature type="binding site" evidence="1">
    <location>
        <position position="59"/>
    </location>
    <ligand>
        <name>S-adenosyl-L-methionine</name>
        <dbReference type="ChEBI" id="CHEBI:59789"/>
    </ligand>
</feature>
<feature type="binding site" evidence="1">
    <location>
        <position position="87"/>
    </location>
    <ligand>
        <name>S-adenosyl-L-methionine</name>
        <dbReference type="ChEBI" id="CHEBI:59789"/>
    </ligand>
</feature>
<dbReference type="EC" id="2.1.1.196" evidence="1"/>
<dbReference type="EMBL" id="AE008384">
    <property type="protein sequence ID" value="AAM30696.1"/>
    <property type="molecule type" value="Genomic_DNA"/>
</dbReference>
<dbReference type="RefSeq" id="WP_011032949.1">
    <property type="nucleotide sequence ID" value="NC_003901.1"/>
</dbReference>
<dbReference type="SMR" id="Q8PY64"/>
<dbReference type="GeneID" id="82160024"/>
<dbReference type="KEGG" id="mma:MM_1000"/>
<dbReference type="PATRIC" id="fig|192952.21.peg.1174"/>
<dbReference type="eggNOG" id="arCOG00977">
    <property type="taxonomic scope" value="Archaea"/>
</dbReference>
<dbReference type="HOGENOM" id="CLU_094143_1_0_2"/>
<dbReference type="UniPathway" id="UPA00148">
    <property type="reaction ID" value="UER00229"/>
</dbReference>
<dbReference type="Proteomes" id="UP000000595">
    <property type="component" value="Chromosome"/>
</dbReference>
<dbReference type="GO" id="GO:0043776">
    <property type="term" value="F:cobalt-precorrin-6B C5-methyltransferase activity"/>
    <property type="evidence" value="ECO:0007669"/>
    <property type="project" value="RHEA"/>
</dbReference>
<dbReference type="GO" id="GO:0008276">
    <property type="term" value="F:protein methyltransferase activity"/>
    <property type="evidence" value="ECO:0007669"/>
    <property type="project" value="InterPro"/>
</dbReference>
<dbReference type="GO" id="GO:0019251">
    <property type="term" value="P:anaerobic cobalamin biosynthetic process"/>
    <property type="evidence" value="ECO:0007669"/>
    <property type="project" value="UniProtKB-UniRule"/>
</dbReference>
<dbReference type="GO" id="GO:0032259">
    <property type="term" value="P:methylation"/>
    <property type="evidence" value="ECO:0007669"/>
    <property type="project" value="UniProtKB-KW"/>
</dbReference>
<dbReference type="Gene3D" id="3.40.50.150">
    <property type="entry name" value="Vaccinia Virus protein VP39"/>
    <property type="match status" value="1"/>
</dbReference>
<dbReference type="HAMAP" id="MF_00786">
    <property type="entry name" value="CbiT"/>
    <property type="match status" value="1"/>
</dbReference>
<dbReference type="InterPro" id="IPR023475">
    <property type="entry name" value="CbiT"/>
</dbReference>
<dbReference type="InterPro" id="IPR014008">
    <property type="entry name" value="Cbl_synth_MTase_CbiT"/>
</dbReference>
<dbReference type="InterPro" id="IPR050714">
    <property type="entry name" value="Cobalamin_biosynth_MTase"/>
</dbReference>
<dbReference type="InterPro" id="IPR025714">
    <property type="entry name" value="Methyltranfer_dom"/>
</dbReference>
<dbReference type="InterPro" id="IPR029063">
    <property type="entry name" value="SAM-dependent_MTases_sf"/>
</dbReference>
<dbReference type="NCBIfam" id="TIGR02469">
    <property type="entry name" value="CbiT"/>
    <property type="match status" value="1"/>
</dbReference>
<dbReference type="PANTHER" id="PTHR43182">
    <property type="entry name" value="COBALT-PRECORRIN-6B C(15)-METHYLTRANSFERASE (DECARBOXYLATING)"/>
    <property type="match status" value="1"/>
</dbReference>
<dbReference type="PANTHER" id="PTHR43182:SF1">
    <property type="entry name" value="COBALT-PRECORRIN-7 C(5)-METHYLTRANSFERASE"/>
    <property type="match status" value="1"/>
</dbReference>
<dbReference type="Pfam" id="PF13847">
    <property type="entry name" value="Methyltransf_31"/>
    <property type="match status" value="1"/>
</dbReference>
<dbReference type="SUPFAM" id="SSF53335">
    <property type="entry name" value="S-adenosyl-L-methionine-dependent methyltransferases"/>
    <property type="match status" value="1"/>
</dbReference>
<reference key="1">
    <citation type="journal article" date="2002" name="J. Mol. Microbiol. Biotechnol.">
        <title>The genome of Methanosarcina mazei: evidence for lateral gene transfer between Bacteria and Archaea.</title>
        <authorList>
            <person name="Deppenmeier U."/>
            <person name="Johann A."/>
            <person name="Hartsch T."/>
            <person name="Merkl R."/>
            <person name="Schmitz R.A."/>
            <person name="Martinez-Arias R."/>
            <person name="Henne A."/>
            <person name="Wiezer A."/>
            <person name="Baeumer S."/>
            <person name="Jacobi C."/>
            <person name="Brueggemann H."/>
            <person name="Lienard T."/>
            <person name="Christmann A."/>
            <person name="Boemecke M."/>
            <person name="Steckel S."/>
            <person name="Bhattacharyya A."/>
            <person name="Lykidis A."/>
            <person name="Overbeek R."/>
            <person name="Klenk H.-P."/>
            <person name="Gunsalus R.P."/>
            <person name="Fritz H.-J."/>
            <person name="Gottschalk G."/>
        </authorList>
    </citation>
    <scope>NUCLEOTIDE SEQUENCE [LARGE SCALE GENOMIC DNA]</scope>
    <source>
        <strain>ATCC BAA-159 / DSM 3647 / Goe1 / Go1 / JCM 11833 / OCM 88</strain>
    </source>
</reference>
<name>CBIT_METMA</name>
<sequence length="184" mass="19584">MSEIVSVSGGPTKPEIIAVSLSKLGLKDGDRFADVGCGTGSVSIEAARIARNLTIYAIDARKEALLATETNFKNFGIENARILAGEASDILGSEKTIDSIDCAFVGGTKNIGSILAKLVEKKARSIVVNAVRIETVVRTIEAMKSLDIFDEVIHVAVSRSFPIAGETMFKPENPVYIVVGKKQS</sequence>